<proteinExistence type="inferred from homology"/>
<accession>A8GVS9</accession>
<comment type="function">
    <text evidence="1">Endonuclease that specifically degrades the RNA of RNA-DNA hybrids.</text>
</comment>
<comment type="catalytic activity">
    <reaction evidence="1">
        <text>Endonucleolytic cleavage to 5'-phosphomonoester.</text>
        <dbReference type="EC" id="3.1.26.4"/>
    </reaction>
</comment>
<comment type="cofactor">
    <cofactor evidence="1">
        <name>Mn(2+)</name>
        <dbReference type="ChEBI" id="CHEBI:29035"/>
    </cofactor>
    <cofactor evidence="1">
        <name>Mg(2+)</name>
        <dbReference type="ChEBI" id="CHEBI:18420"/>
    </cofactor>
    <text evidence="1">Manganese or magnesium. Binds 1 divalent metal ion per monomer in the absence of substrate. May bind a second metal ion after substrate binding.</text>
</comment>
<comment type="subcellular location">
    <subcellularLocation>
        <location evidence="1">Cytoplasm</location>
    </subcellularLocation>
</comment>
<comment type="similarity">
    <text evidence="1">Belongs to the RNase HII family.</text>
</comment>
<feature type="chain" id="PRO_1000031195" description="Ribonuclease HII">
    <location>
        <begin position="1"/>
        <end position="196"/>
    </location>
</feature>
<feature type="domain" description="RNase H type-2" evidence="2">
    <location>
        <begin position="15"/>
        <end position="196"/>
    </location>
</feature>
<feature type="binding site" evidence="1">
    <location>
        <position position="21"/>
    </location>
    <ligand>
        <name>a divalent metal cation</name>
        <dbReference type="ChEBI" id="CHEBI:60240"/>
    </ligand>
</feature>
<feature type="binding site" evidence="1">
    <location>
        <position position="22"/>
    </location>
    <ligand>
        <name>a divalent metal cation</name>
        <dbReference type="ChEBI" id="CHEBI:60240"/>
    </ligand>
</feature>
<feature type="binding site" evidence="1">
    <location>
        <position position="112"/>
    </location>
    <ligand>
        <name>a divalent metal cation</name>
        <dbReference type="ChEBI" id="CHEBI:60240"/>
    </ligand>
</feature>
<reference key="1">
    <citation type="submission" date="2007-09" db="EMBL/GenBank/DDBJ databases">
        <title>Complete genome sequencing of Rickettsia bellii.</title>
        <authorList>
            <person name="Madan A."/>
            <person name="Lee H."/>
            <person name="Madan A."/>
            <person name="Yoon J.-G."/>
            <person name="Ryu G.-Y."/>
            <person name="Dasch G."/>
            <person name="Ereemeva M."/>
        </authorList>
    </citation>
    <scope>NUCLEOTIDE SEQUENCE [LARGE SCALE GENOMIC DNA]</scope>
    <source>
        <strain>OSU 85-389</strain>
    </source>
</reference>
<organism>
    <name type="scientific">Rickettsia bellii (strain OSU 85-389)</name>
    <dbReference type="NCBI Taxonomy" id="391896"/>
    <lineage>
        <taxon>Bacteria</taxon>
        <taxon>Pseudomonadati</taxon>
        <taxon>Pseudomonadota</taxon>
        <taxon>Alphaproteobacteria</taxon>
        <taxon>Rickettsiales</taxon>
        <taxon>Rickettsiaceae</taxon>
        <taxon>Rickettsieae</taxon>
        <taxon>Rickettsia</taxon>
        <taxon>belli group</taxon>
    </lineage>
</organism>
<name>RNH2_RICB8</name>
<sequence>MEIDILHFEKKYPNFILAGIDEAGRGPLAGPVVAAAVIVDQNNIIAGIKDSKKLSKKKRELLYEQITANYIWATGIISHTEIDKINILEATKKACILAAENLSTKPEIVLVDGNMQFSDKRFISIINGDNLSLSIAAASIIAKVTRDRLMLELSNEFPQYLWHKNSGYGTKEHAQAIKEYGLSPYHRLSFTKALYK</sequence>
<keyword id="KW-0963">Cytoplasm</keyword>
<keyword id="KW-0255">Endonuclease</keyword>
<keyword id="KW-0378">Hydrolase</keyword>
<keyword id="KW-0464">Manganese</keyword>
<keyword id="KW-0479">Metal-binding</keyword>
<keyword id="KW-0540">Nuclease</keyword>
<protein>
    <recommendedName>
        <fullName evidence="1">Ribonuclease HII</fullName>
        <shortName evidence="1">RNase HII</shortName>
        <ecNumber evidence="1">3.1.26.4</ecNumber>
    </recommendedName>
</protein>
<evidence type="ECO:0000255" key="1">
    <source>
        <dbReference type="HAMAP-Rule" id="MF_00052"/>
    </source>
</evidence>
<evidence type="ECO:0000255" key="2">
    <source>
        <dbReference type="PROSITE-ProRule" id="PRU01319"/>
    </source>
</evidence>
<dbReference type="EC" id="3.1.26.4" evidence="1"/>
<dbReference type="EMBL" id="CP000849">
    <property type="protein sequence ID" value="ABV78956.1"/>
    <property type="molecule type" value="Genomic_DNA"/>
</dbReference>
<dbReference type="RefSeq" id="WP_011477183.1">
    <property type="nucleotide sequence ID" value="NC_009883.1"/>
</dbReference>
<dbReference type="SMR" id="A8GVS9"/>
<dbReference type="KEGG" id="rbo:A1I_02935"/>
<dbReference type="HOGENOM" id="CLU_036532_3_1_5"/>
<dbReference type="GO" id="GO:0005737">
    <property type="term" value="C:cytoplasm"/>
    <property type="evidence" value="ECO:0007669"/>
    <property type="project" value="UniProtKB-SubCell"/>
</dbReference>
<dbReference type="GO" id="GO:0032299">
    <property type="term" value="C:ribonuclease H2 complex"/>
    <property type="evidence" value="ECO:0007669"/>
    <property type="project" value="TreeGrafter"/>
</dbReference>
<dbReference type="GO" id="GO:0030145">
    <property type="term" value="F:manganese ion binding"/>
    <property type="evidence" value="ECO:0007669"/>
    <property type="project" value="UniProtKB-UniRule"/>
</dbReference>
<dbReference type="GO" id="GO:0003723">
    <property type="term" value="F:RNA binding"/>
    <property type="evidence" value="ECO:0007669"/>
    <property type="project" value="InterPro"/>
</dbReference>
<dbReference type="GO" id="GO:0004523">
    <property type="term" value="F:RNA-DNA hybrid ribonuclease activity"/>
    <property type="evidence" value="ECO:0007669"/>
    <property type="project" value="UniProtKB-UniRule"/>
</dbReference>
<dbReference type="GO" id="GO:0043137">
    <property type="term" value="P:DNA replication, removal of RNA primer"/>
    <property type="evidence" value="ECO:0007669"/>
    <property type="project" value="TreeGrafter"/>
</dbReference>
<dbReference type="GO" id="GO:0006298">
    <property type="term" value="P:mismatch repair"/>
    <property type="evidence" value="ECO:0007669"/>
    <property type="project" value="TreeGrafter"/>
</dbReference>
<dbReference type="CDD" id="cd07182">
    <property type="entry name" value="RNase_HII_bacteria_HII_like"/>
    <property type="match status" value="1"/>
</dbReference>
<dbReference type="Gene3D" id="3.30.420.10">
    <property type="entry name" value="Ribonuclease H-like superfamily/Ribonuclease H"/>
    <property type="match status" value="1"/>
</dbReference>
<dbReference type="HAMAP" id="MF_00052_B">
    <property type="entry name" value="RNase_HII_B"/>
    <property type="match status" value="1"/>
</dbReference>
<dbReference type="InterPro" id="IPR022898">
    <property type="entry name" value="RNase_HII"/>
</dbReference>
<dbReference type="InterPro" id="IPR001352">
    <property type="entry name" value="RNase_HII/HIII"/>
</dbReference>
<dbReference type="InterPro" id="IPR024567">
    <property type="entry name" value="RNase_HII/HIII_dom"/>
</dbReference>
<dbReference type="InterPro" id="IPR012337">
    <property type="entry name" value="RNaseH-like_sf"/>
</dbReference>
<dbReference type="InterPro" id="IPR036397">
    <property type="entry name" value="RNaseH_sf"/>
</dbReference>
<dbReference type="NCBIfam" id="NF000594">
    <property type="entry name" value="PRK00015.1-1"/>
    <property type="match status" value="1"/>
</dbReference>
<dbReference type="NCBIfam" id="NF000595">
    <property type="entry name" value="PRK00015.1-3"/>
    <property type="match status" value="1"/>
</dbReference>
<dbReference type="PANTHER" id="PTHR10954">
    <property type="entry name" value="RIBONUCLEASE H2 SUBUNIT A"/>
    <property type="match status" value="1"/>
</dbReference>
<dbReference type="PANTHER" id="PTHR10954:SF18">
    <property type="entry name" value="RIBONUCLEASE HII"/>
    <property type="match status" value="1"/>
</dbReference>
<dbReference type="Pfam" id="PF01351">
    <property type="entry name" value="RNase_HII"/>
    <property type="match status" value="1"/>
</dbReference>
<dbReference type="SUPFAM" id="SSF53098">
    <property type="entry name" value="Ribonuclease H-like"/>
    <property type="match status" value="1"/>
</dbReference>
<dbReference type="PROSITE" id="PS51975">
    <property type="entry name" value="RNASE_H_2"/>
    <property type="match status" value="1"/>
</dbReference>
<gene>
    <name evidence="1" type="primary">rnhB</name>
    <name type="ordered locus">A1I_02935</name>
</gene>